<feature type="chain" id="PRO_0000132888" description="P18 protein">
    <location>
        <begin position="1"/>
        <end position="161"/>
    </location>
</feature>
<name>VP18_NPVAC</name>
<keyword id="KW-1185">Reference proteome</keyword>
<accession>P41481</accession>
<organismHost>
    <name type="scientific">Lepidoptera</name>
    <name type="common">butterflies and moths</name>
    <dbReference type="NCBI Taxonomy" id="7088"/>
</organismHost>
<proteinExistence type="predicted"/>
<protein>
    <recommendedName>
        <fullName>P18 protein</fullName>
    </recommendedName>
</protein>
<dbReference type="EMBL" id="L22858">
    <property type="protein sequence ID" value="AAA66723.1"/>
    <property type="molecule type" value="Genomic_DNA"/>
</dbReference>
<dbReference type="PIR" id="F72861">
    <property type="entry name" value="F72861"/>
</dbReference>
<dbReference type="KEGG" id="vg:1403926"/>
<dbReference type="OrthoDB" id="11558at10239"/>
<dbReference type="Proteomes" id="UP000008292">
    <property type="component" value="Segment"/>
</dbReference>
<dbReference type="InterPro" id="IPR007773">
    <property type="entry name" value="AcMNPV_P18"/>
</dbReference>
<dbReference type="Pfam" id="PF05081">
    <property type="entry name" value="AcMNPV_P18"/>
    <property type="match status" value="1"/>
</dbReference>
<sequence>MATSKTIVLYLCQAPATASLYVSADTDADEPIIYFENITECLTDDQCDKFTYFAELKQEQALFMKKVYKHLVLKNEGAFNKHHVLFDAMIMYKTYVHLVDESAFGSNVINYCEQFITAIFEIFTLSSKIVVAVPVNWENDNLSVLLKHLHNLNLIGIEIVN</sequence>
<reference key="1">
    <citation type="journal article" date="1994" name="Virology">
        <title>The complete DNA sequence of Autographa californica nuclear polyhedrosis virus.</title>
        <authorList>
            <person name="Ayres M.D."/>
            <person name="Howard S.C."/>
            <person name="Kuzio J."/>
            <person name="Lopez-Ferber M."/>
            <person name="Possee R.D."/>
        </authorList>
    </citation>
    <scope>NUCLEOTIDE SEQUENCE [LARGE SCALE GENOMIC DNA]</scope>
    <source>
        <strain>C6</strain>
    </source>
</reference>
<gene>
    <name type="primary">P18</name>
</gene>
<organism>
    <name type="scientific">Autographa californica nuclear polyhedrosis virus</name>
    <name type="common">AcMNPV</name>
    <dbReference type="NCBI Taxonomy" id="46015"/>
    <lineage>
        <taxon>Viruses</taxon>
        <taxon>Viruses incertae sedis</taxon>
        <taxon>Naldaviricetes</taxon>
        <taxon>Lefavirales</taxon>
        <taxon>Baculoviridae</taxon>
        <taxon>Alphabaculovirus</taxon>
        <taxon>Alphabaculovirus aucalifornicae</taxon>
    </lineage>
</organism>